<feature type="signal peptide" evidence="1">
    <location>
        <begin position="1"/>
        <end position="18"/>
    </location>
</feature>
<feature type="chain" id="PRO_0000013772" description="Uncharacterized fimbrial-like protein YfcQ">
    <location>
        <begin position="19"/>
        <end position="162"/>
    </location>
</feature>
<keyword id="KW-1185">Reference proteome</keyword>
<keyword id="KW-0732">Signal</keyword>
<sequence>MRKTFLTLLCVSSAIAHAADEDITFHGTLLSPPTCSISGGKTIEVEFRDLIIDDINGNYGRKEVPYELTCDSTTRHPDWEMTLTWTGTQTSFNDAAIETDVPGFGIELQHDGQRFKLNTPLAINATDFTQKPKLEAVPVKASDAVLSDTNFSAYATLRVDYQ</sequence>
<reference key="1">
    <citation type="journal article" date="1997" name="Science">
        <title>The complete genome sequence of Escherichia coli K-12.</title>
        <authorList>
            <person name="Blattner F.R."/>
            <person name="Plunkett G. III"/>
            <person name="Bloch C.A."/>
            <person name="Perna N.T."/>
            <person name="Burland V."/>
            <person name="Riley M."/>
            <person name="Collado-Vides J."/>
            <person name="Glasner J.D."/>
            <person name="Rode C.K."/>
            <person name="Mayhew G.F."/>
            <person name="Gregor J."/>
            <person name="Davis N.W."/>
            <person name="Kirkpatrick H.A."/>
            <person name="Goeden M.A."/>
            <person name="Rose D.J."/>
            <person name="Mau B."/>
            <person name="Shao Y."/>
        </authorList>
    </citation>
    <scope>NUCLEOTIDE SEQUENCE [LARGE SCALE GENOMIC DNA]</scope>
    <source>
        <strain>K12 / MG1655 / ATCC 47076</strain>
    </source>
</reference>
<reference key="2">
    <citation type="journal article" date="2006" name="Mol. Syst. Biol.">
        <title>Highly accurate genome sequences of Escherichia coli K-12 strains MG1655 and W3110.</title>
        <authorList>
            <person name="Hayashi K."/>
            <person name="Morooka N."/>
            <person name="Yamamoto Y."/>
            <person name="Fujita K."/>
            <person name="Isono K."/>
            <person name="Choi S."/>
            <person name="Ohtsubo E."/>
            <person name="Baba T."/>
            <person name="Wanner B.L."/>
            <person name="Mori H."/>
            <person name="Horiuchi T."/>
        </authorList>
    </citation>
    <scope>NUCLEOTIDE SEQUENCE [LARGE SCALE GENOMIC DNA]</scope>
    <source>
        <strain>K12 / W3110 / ATCC 27325 / DSM 5911</strain>
    </source>
</reference>
<reference key="3">
    <citation type="journal article" date="2010" name="Environ. Microbiol.">
        <title>Escherichia coli K-12 possesses multiple cryptic but functional chaperone-usher fimbriae with distinct surface specificities.</title>
        <authorList>
            <person name="Korea C.G."/>
            <person name="Badouraly R."/>
            <person name="Prevost M.C."/>
            <person name="Ghigo J.M."/>
            <person name="Beloin C."/>
        </authorList>
    </citation>
    <scope>FUNCTION</scope>
    <scope>INDUCTION</scope>
    <scope>DISRUPTION PHENOTYPE</scope>
    <source>
        <strain>K12 / MG1655 / ATCC 47076</strain>
    </source>
</reference>
<accession>P76500</accession>
<accession>Q2MAL5</accession>
<name>YFCQ_ECOLI</name>
<gene>
    <name type="primary">yfcQ</name>
    <name type="ordered locus">b2334</name>
    <name type="ordered locus">JW2331</name>
</gene>
<comment type="function">
    <text evidence="2">Part of the yfcOPQRSUV fimbrial operon. Could contribute to adhesion to various surfaces in specific environmental niches. Increases adhesion to eukaryotic T24 bladder epithelial cells in the absence of fim genes.</text>
</comment>
<comment type="induction">
    <text evidence="2">Expression is negatively regulated by H-NS and subjected to cAMP receptor protein (CRP)-mediated catabolite repression.</text>
</comment>
<comment type="disruption phenotype">
    <text evidence="2">Deletion of the operon under classical laboratory conditions does not result in any major effect on E.coli capacity to form biofilms compared with the wild-type strain.</text>
</comment>
<comment type="miscellaneous">
    <text evidence="4">The operon is cryptic under classical laboratory conditions, but is functional when constitutively expressed.</text>
</comment>
<comment type="similarity">
    <text evidence="3">Belongs to the fimbrial protein family.</text>
</comment>
<organism>
    <name type="scientific">Escherichia coli (strain K12)</name>
    <dbReference type="NCBI Taxonomy" id="83333"/>
    <lineage>
        <taxon>Bacteria</taxon>
        <taxon>Pseudomonadati</taxon>
        <taxon>Pseudomonadota</taxon>
        <taxon>Gammaproteobacteria</taxon>
        <taxon>Enterobacterales</taxon>
        <taxon>Enterobacteriaceae</taxon>
        <taxon>Escherichia</taxon>
    </lineage>
</organism>
<evidence type="ECO:0000255" key="1"/>
<evidence type="ECO:0000269" key="2">
    <source>
    </source>
</evidence>
<evidence type="ECO:0000305" key="3"/>
<evidence type="ECO:0000305" key="4">
    <source>
    </source>
</evidence>
<proteinExistence type="evidence at transcript level"/>
<protein>
    <recommendedName>
        <fullName>Uncharacterized fimbrial-like protein YfcQ</fullName>
    </recommendedName>
</protein>
<dbReference type="EMBL" id="U00096">
    <property type="protein sequence ID" value="AAC75394.1"/>
    <property type="molecule type" value="Genomic_DNA"/>
</dbReference>
<dbReference type="EMBL" id="AP009048">
    <property type="protein sequence ID" value="BAE76691.1"/>
    <property type="molecule type" value="Genomic_DNA"/>
</dbReference>
<dbReference type="PIR" id="D65006">
    <property type="entry name" value="D65006"/>
</dbReference>
<dbReference type="RefSeq" id="NP_416837.1">
    <property type="nucleotide sequence ID" value="NC_000913.3"/>
</dbReference>
<dbReference type="RefSeq" id="WP_001232541.1">
    <property type="nucleotide sequence ID" value="NZ_LN832404.1"/>
</dbReference>
<dbReference type="SMR" id="P76500"/>
<dbReference type="BioGRID" id="4260530">
    <property type="interactions" value="3"/>
</dbReference>
<dbReference type="BioGRID" id="851120">
    <property type="interactions" value="9"/>
</dbReference>
<dbReference type="FunCoup" id="P76500">
    <property type="interactions" value="374"/>
</dbReference>
<dbReference type="IntAct" id="P76500">
    <property type="interactions" value="12"/>
</dbReference>
<dbReference type="STRING" id="511145.b2334"/>
<dbReference type="PaxDb" id="511145-b2334"/>
<dbReference type="EnsemblBacteria" id="AAC75394">
    <property type="protein sequence ID" value="AAC75394"/>
    <property type="gene ID" value="b2334"/>
</dbReference>
<dbReference type="GeneID" id="946779"/>
<dbReference type="KEGG" id="ecj:JW2331"/>
<dbReference type="KEGG" id="eco:b2334"/>
<dbReference type="KEGG" id="ecoc:C3026_13000"/>
<dbReference type="PATRIC" id="fig|1411691.4.peg.4398"/>
<dbReference type="EchoBASE" id="EB3873"/>
<dbReference type="eggNOG" id="COG3539">
    <property type="taxonomic scope" value="Bacteria"/>
</dbReference>
<dbReference type="HOGENOM" id="CLU_114111_2_1_6"/>
<dbReference type="InParanoid" id="P76500"/>
<dbReference type="OMA" id="LINPPPC"/>
<dbReference type="OrthoDB" id="7018672at2"/>
<dbReference type="PhylomeDB" id="P76500"/>
<dbReference type="BioCyc" id="EcoCyc:G7205-MONOMER"/>
<dbReference type="PRO" id="PR:P76500"/>
<dbReference type="Proteomes" id="UP000000625">
    <property type="component" value="Chromosome"/>
</dbReference>
<dbReference type="GO" id="GO:0009289">
    <property type="term" value="C:pilus"/>
    <property type="evidence" value="ECO:0000318"/>
    <property type="project" value="GO_Central"/>
</dbReference>
<dbReference type="GO" id="GO:0007155">
    <property type="term" value="P:cell adhesion"/>
    <property type="evidence" value="ECO:0000315"/>
    <property type="project" value="EcoCyc"/>
</dbReference>
<dbReference type="GO" id="GO:0043709">
    <property type="term" value="P:cell adhesion involved in single-species biofilm formation"/>
    <property type="evidence" value="ECO:0000318"/>
    <property type="project" value="GO_Central"/>
</dbReference>
<dbReference type="Gene3D" id="2.60.40.1090">
    <property type="entry name" value="Fimbrial-type adhesion domain"/>
    <property type="match status" value="1"/>
</dbReference>
<dbReference type="InterPro" id="IPR000259">
    <property type="entry name" value="Adhesion_dom_fimbrial"/>
</dbReference>
<dbReference type="InterPro" id="IPR036937">
    <property type="entry name" value="Adhesion_dom_fimbrial_sf"/>
</dbReference>
<dbReference type="InterPro" id="IPR008966">
    <property type="entry name" value="Adhesion_dom_sf"/>
</dbReference>
<dbReference type="InterPro" id="IPR050263">
    <property type="entry name" value="Bact_Fimbrial_Adh_Pro"/>
</dbReference>
<dbReference type="PANTHER" id="PTHR33420">
    <property type="entry name" value="FIMBRIAL SUBUNIT ELFA-RELATED"/>
    <property type="match status" value="1"/>
</dbReference>
<dbReference type="PANTHER" id="PTHR33420:SF33">
    <property type="entry name" value="MINOR FIMBRIAL SUBUNIT"/>
    <property type="match status" value="1"/>
</dbReference>
<dbReference type="Pfam" id="PF00419">
    <property type="entry name" value="Fimbrial"/>
    <property type="match status" value="1"/>
</dbReference>
<dbReference type="SUPFAM" id="SSF49401">
    <property type="entry name" value="Bacterial adhesins"/>
    <property type="match status" value="1"/>
</dbReference>